<keyword id="KW-0378">Hydrolase</keyword>
<keyword id="KW-0442">Lipid degradation</keyword>
<keyword id="KW-0443">Lipid metabolism</keyword>
<keyword id="KW-0472">Membrane</keyword>
<keyword id="KW-1185">Reference proteome</keyword>
<keyword id="KW-0812">Transmembrane</keyword>
<keyword id="KW-1133">Transmembrane helix</keyword>
<accession>Q5BGC2</accession>
<accession>C8VTH8</accession>
<comment type="function">
    <text evidence="1">Probable lipid hydrolase.</text>
</comment>
<comment type="subcellular location">
    <subcellularLocation>
        <location evidence="5">Membrane</location>
        <topology evidence="5">Single-pass membrane protein</topology>
    </subcellularLocation>
</comment>
<comment type="similarity">
    <text evidence="5">Belongs to the PLPL family.</text>
</comment>
<gene>
    <name type="ORF">AN0408</name>
</gene>
<dbReference type="EC" id="3.1.1.-"/>
<dbReference type="EMBL" id="AACD01000007">
    <property type="protein sequence ID" value="EAA66507.1"/>
    <property type="molecule type" value="Genomic_DNA"/>
</dbReference>
<dbReference type="EMBL" id="BN001308">
    <property type="protein sequence ID" value="CBF89546.1"/>
    <property type="molecule type" value="Genomic_DNA"/>
</dbReference>
<dbReference type="RefSeq" id="XP_658012.1">
    <property type="nucleotide sequence ID" value="XM_652920.1"/>
</dbReference>
<dbReference type="STRING" id="227321.Q5BGC2"/>
<dbReference type="EnsemblFungi" id="CBF89546">
    <property type="protein sequence ID" value="CBF89546"/>
    <property type="gene ID" value="ANIA_00408"/>
</dbReference>
<dbReference type="KEGG" id="ani:ANIA_00408"/>
<dbReference type="eggNOG" id="KOG2214">
    <property type="taxonomic scope" value="Eukaryota"/>
</dbReference>
<dbReference type="HOGENOM" id="CLU_009031_2_0_1"/>
<dbReference type="InParanoid" id="Q5BGC2"/>
<dbReference type="OMA" id="CSWFTRG"/>
<dbReference type="OrthoDB" id="15478at2759"/>
<dbReference type="Proteomes" id="UP000000560">
    <property type="component" value="Chromosome VIII"/>
</dbReference>
<dbReference type="GO" id="GO:0005811">
    <property type="term" value="C:lipid droplet"/>
    <property type="evidence" value="ECO:0007669"/>
    <property type="project" value="EnsemblFungi"/>
</dbReference>
<dbReference type="GO" id="GO:0016020">
    <property type="term" value="C:membrane"/>
    <property type="evidence" value="ECO:0007669"/>
    <property type="project" value="UniProtKB-SubCell"/>
</dbReference>
<dbReference type="GO" id="GO:0004806">
    <property type="term" value="F:triacylglycerol lipase activity"/>
    <property type="evidence" value="ECO:0007669"/>
    <property type="project" value="EnsemblFungi"/>
</dbReference>
<dbReference type="GO" id="GO:1990748">
    <property type="term" value="P:cellular detoxification"/>
    <property type="evidence" value="ECO:0007669"/>
    <property type="project" value="EnsemblFungi"/>
</dbReference>
<dbReference type="GO" id="GO:0016042">
    <property type="term" value="P:lipid catabolic process"/>
    <property type="evidence" value="ECO:0007669"/>
    <property type="project" value="UniProtKB-KW"/>
</dbReference>
<dbReference type="GO" id="GO:0006642">
    <property type="term" value="P:triglyceride mobilization"/>
    <property type="evidence" value="ECO:0007669"/>
    <property type="project" value="EnsemblFungi"/>
</dbReference>
<dbReference type="CDD" id="cd07232">
    <property type="entry name" value="Pat_PLPL"/>
    <property type="match status" value="1"/>
</dbReference>
<dbReference type="Gene3D" id="3.40.1090.10">
    <property type="entry name" value="Cytosolic phospholipase A2 catalytic domain"/>
    <property type="match status" value="2"/>
</dbReference>
<dbReference type="InterPro" id="IPR016035">
    <property type="entry name" value="Acyl_Trfase/lysoPLipase"/>
</dbReference>
<dbReference type="InterPro" id="IPR050301">
    <property type="entry name" value="NTE"/>
</dbReference>
<dbReference type="InterPro" id="IPR002641">
    <property type="entry name" value="PNPLA_dom"/>
</dbReference>
<dbReference type="InterPro" id="IPR021771">
    <property type="entry name" value="Triacylglycerol_lipase_N"/>
</dbReference>
<dbReference type="PANTHER" id="PTHR14226">
    <property type="entry name" value="NEUROPATHY TARGET ESTERASE/SWISS CHEESE D.MELANOGASTER"/>
    <property type="match status" value="1"/>
</dbReference>
<dbReference type="PANTHER" id="PTHR14226:SF66">
    <property type="entry name" value="TRIACYLGLYCEROL LIPASE PTL2"/>
    <property type="match status" value="1"/>
</dbReference>
<dbReference type="Pfam" id="PF11815">
    <property type="entry name" value="DUF3336"/>
    <property type="match status" value="1"/>
</dbReference>
<dbReference type="Pfam" id="PF01734">
    <property type="entry name" value="Patatin"/>
    <property type="match status" value="1"/>
</dbReference>
<dbReference type="SUPFAM" id="SSF52151">
    <property type="entry name" value="FabD/lysophospholipase-like"/>
    <property type="match status" value="1"/>
</dbReference>
<dbReference type="PROSITE" id="PS51635">
    <property type="entry name" value="PNPLA"/>
    <property type="match status" value="1"/>
</dbReference>
<sequence length="749" mass="85251">MEKSAAGDNIDKYSPSSIPDYDTEFLNPDDLRAFEKALTDQDADPLVALNDWRPVYQRVVRRGRGRRKSAAAAPRRTKDETREGVLYTVLKWPFLLFVLGWITFLSVGYALTRIYIFLYEQWVTWRGKRESLRRELYKHENYDDWLHAAQALDEYLGNQRWKKIDEYAYYDHLTIRKLGRQLRTVRMQVEEEMKRGESGSTVVVEELCNLLEACVKANFAGVENPRLYSEAYSGTKDLVQDYIDEVHACVKVITDSRQARNEEKYSHFKHLDTNFGRTALCLSGGATFAYYHFGVVRALLDNEVLPSIITGTSGGALVAALVGTRTDDELKQLLVPALAHKIKACSEGFTTWARRWWRTGARFDTMDWARQCSWFCRGSTTFREAYERTGRILNVSCVPSDPHSPTILANYLTSPNCVIWSAVLASAAVPGILNPVVLMTKKRDGTLAPYSFGHKWKDGSLRTDIPIKALNLHFNVNFTIVSQVNPHINLFFFSSRGAVGRPVTHRKGRGWRGGFLGSAIEQYIKLDLNKWLKVLRHLELLPRPLGQDWSEIWLQKFSGTVTIWPKTVPSDFYHILSDPSPERLARMLRTGQQSTFPKIQFIKNRLKIEYAILEGLHRFSADGESVGATSIQPFPFDNGAAGADQKSNDPREERLNRNFPERSSEYSYDYVKSFSDFSDDPIVSAENSSVDDNYIVPSRQRDAGAEAGVGTGTAERRGSFSSLFNLEEMRRQSAVFFDDPDLYRDGGDL</sequence>
<organism>
    <name type="scientific">Emericella nidulans (strain FGSC A4 / ATCC 38163 / CBS 112.46 / NRRL 194 / M139)</name>
    <name type="common">Aspergillus nidulans</name>
    <dbReference type="NCBI Taxonomy" id="227321"/>
    <lineage>
        <taxon>Eukaryota</taxon>
        <taxon>Fungi</taxon>
        <taxon>Dikarya</taxon>
        <taxon>Ascomycota</taxon>
        <taxon>Pezizomycotina</taxon>
        <taxon>Eurotiomycetes</taxon>
        <taxon>Eurotiomycetidae</taxon>
        <taxon>Eurotiales</taxon>
        <taxon>Aspergillaceae</taxon>
        <taxon>Aspergillus</taxon>
        <taxon>Aspergillus subgen. Nidulantes</taxon>
    </lineage>
</organism>
<name>PLPL_EMENI</name>
<reference key="1">
    <citation type="journal article" date="2005" name="Nature">
        <title>Sequencing of Aspergillus nidulans and comparative analysis with A. fumigatus and A. oryzae.</title>
        <authorList>
            <person name="Galagan J.E."/>
            <person name="Calvo S.E."/>
            <person name="Cuomo C."/>
            <person name="Ma L.-J."/>
            <person name="Wortman J.R."/>
            <person name="Batzoglou S."/>
            <person name="Lee S.-I."/>
            <person name="Bastuerkmen M."/>
            <person name="Spevak C.C."/>
            <person name="Clutterbuck J."/>
            <person name="Kapitonov V."/>
            <person name="Jurka J."/>
            <person name="Scazzocchio C."/>
            <person name="Farman M.L."/>
            <person name="Butler J."/>
            <person name="Purcell S."/>
            <person name="Harris S."/>
            <person name="Braus G.H."/>
            <person name="Draht O."/>
            <person name="Busch S."/>
            <person name="D'Enfert C."/>
            <person name="Bouchier C."/>
            <person name="Goldman G.H."/>
            <person name="Bell-Pedersen D."/>
            <person name="Griffiths-Jones S."/>
            <person name="Doonan J.H."/>
            <person name="Yu J."/>
            <person name="Vienken K."/>
            <person name="Pain A."/>
            <person name="Freitag M."/>
            <person name="Selker E.U."/>
            <person name="Archer D.B."/>
            <person name="Penalva M.A."/>
            <person name="Oakley B.R."/>
            <person name="Momany M."/>
            <person name="Tanaka T."/>
            <person name="Kumagai T."/>
            <person name="Asai K."/>
            <person name="Machida M."/>
            <person name="Nierman W.C."/>
            <person name="Denning D.W."/>
            <person name="Caddick M.X."/>
            <person name="Hynes M."/>
            <person name="Paoletti M."/>
            <person name="Fischer R."/>
            <person name="Miller B.L."/>
            <person name="Dyer P.S."/>
            <person name="Sachs M.S."/>
            <person name="Osmani S.A."/>
            <person name="Birren B.W."/>
        </authorList>
    </citation>
    <scope>NUCLEOTIDE SEQUENCE [LARGE SCALE GENOMIC DNA]</scope>
    <source>
        <strain>FGSC A4 / ATCC 38163 / CBS 112.46 / NRRL 194 / M139</strain>
    </source>
</reference>
<reference key="2">
    <citation type="journal article" date="2009" name="Fungal Genet. Biol.">
        <title>The 2008 update of the Aspergillus nidulans genome annotation: a community effort.</title>
        <authorList>
            <person name="Wortman J.R."/>
            <person name="Gilsenan J.M."/>
            <person name="Joardar V."/>
            <person name="Deegan J."/>
            <person name="Clutterbuck J."/>
            <person name="Andersen M.R."/>
            <person name="Archer D."/>
            <person name="Bencina M."/>
            <person name="Braus G."/>
            <person name="Coutinho P."/>
            <person name="von Dohren H."/>
            <person name="Doonan J."/>
            <person name="Driessen A.J."/>
            <person name="Durek P."/>
            <person name="Espeso E."/>
            <person name="Fekete E."/>
            <person name="Flipphi M."/>
            <person name="Estrada C.G."/>
            <person name="Geysens S."/>
            <person name="Goldman G."/>
            <person name="de Groot P.W."/>
            <person name="Hansen K."/>
            <person name="Harris S.D."/>
            <person name="Heinekamp T."/>
            <person name="Helmstaedt K."/>
            <person name="Henrissat B."/>
            <person name="Hofmann G."/>
            <person name="Homan T."/>
            <person name="Horio T."/>
            <person name="Horiuchi H."/>
            <person name="James S."/>
            <person name="Jones M."/>
            <person name="Karaffa L."/>
            <person name="Karanyi Z."/>
            <person name="Kato M."/>
            <person name="Keller N."/>
            <person name="Kelly D.E."/>
            <person name="Kiel J.A."/>
            <person name="Kim J.M."/>
            <person name="van der Klei I.J."/>
            <person name="Klis F.M."/>
            <person name="Kovalchuk A."/>
            <person name="Krasevec N."/>
            <person name="Kubicek C.P."/>
            <person name="Liu B."/>
            <person name="Maccabe A."/>
            <person name="Meyer V."/>
            <person name="Mirabito P."/>
            <person name="Miskei M."/>
            <person name="Mos M."/>
            <person name="Mullins J."/>
            <person name="Nelson D.R."/>
            <person name="Nielsen J."/>
            <person name="Oakley B.R."/>
            <person name="Osmani S.A."/>
            <person name="Pakula T."/>
            <person name="Paszewski A."/>
            <person name="Paulsen I."/>
            <person name="Pilsyk S."/>
            <person name="Pocsi I."/>
            <person name="Punt P.J."/>
            <person name="Ram A.F."/>
            <person name="Ren Q."/>
            <person name="Robellet X."/>
            <person name="Robson G."/>
            <person name="Seiboth B."/>
            <person name="van Solingen P."/>
            <person name="Specht T."/>
            <person name="Sun J."/>
            <person name="Taheri-Talesh N."/>
            <person name="Takeshita N."/>
            <person name="Ussery D."/>
            <person name="vanKuyk P.A."/>
            <person name="Visser H."/>
            <person name="van de Vondervoort P.J."/>
            <person name="de Vries R.P."/>
            <person name="Walton J."/>
            <person name="Xiang X."/>
            <person name="Xiong Y."/>
            <person name="Zeng A.P."/>
            <person name="Brandt B.W."/>
            <person name="Cornell M.J."/>
            <person name="van den Hondel C.A."/>
            <person name="Visser J."/>
            <person name="Oliver S.G."/>
            <person name="Turner G."/>
        </authorList>
    </citation>
    <scope>GENOME REANNOTATION</scope>
    <source>
        <strain>FGSC A4 / ATCC 38163 / CBS 112.46 / NRRL 194 / M139</strain>
    </source>
</reference>
<proteinExistence type="inferred from homology"/>
<evidence type="ECO:0000250" key="1"/>
<evidence type="ECO:0000255" key="2"/>
<evidence type="ECO:0000255" key="3">
    <source>
        <dbReference type="PROSITE-ProRule" id="PRU01161"/>
    </source>
</evidence>
<evidence type="ECO:0000256" key="4">
    <source>
        <dbReference type="SAM" id="MobiDB-lite"/>
    </source>
</evidence>
<evidence type="ECO:0000305" key="5"/>
<feature type="chain" id="PRO_0000295559" description="Patatin-like phospholipase domain-containing protein AN0408">
    <location>
        <begin position="1"/>
        <end position="749"/>
    </location>
</feature>
<feature type="transmembrane region" description="Helical" evidence="2">
    <location>
        <begin position="92"/>
        <end position="112"/>
    </location>
</feature>
<feature type="domain" description="PNPLA" evidence="3">
    <location>
        <begin position="280"/>
        <end position="471"/>
    </location>
</feature>
<feature type="region of interest" description="Disordered" evidence="4">
    <location>
        <begin position="1"/>
        <end position="21"/>
    </location>
</feature>
<feature type="region of interest" description="Disordered" evidence="4">
    <location>
        <begin position="630"/>
        <end position="659"/>
    </location>
</feature>
<feature type="short sequence motif" description="GXSXG" evidence="3">
    <location>
        <begin position="311"/>
        <end position="315"/>
    </location>
</feature>
<feature type="compositionally biased region" description="Basic and acidic residues" evidence="4">
    <location>
        <begin position="1"/>
        <end position="11"/>
    </location>
</feature>
<feature type="compositionally biased region" description="Basic and acidic residues" evidence="4">
    <location>
        <begin position="646"/>
        <end position="659"/>
    </location>
</feature>
<feature type="active site" description="Nucleophile" evidence="3">
    <location>
        <position position="313"/>
    </location>
</feature>
<feature type="active site" description="Proton acceptor" evidence="3">
    <location>
        <position position="458"/>
    </location>
</feature>
<protein>
    <recommendedName>
        <fullName>Patatin-like phospholipase domain-containing protein AN0408</fullName>
        <ecNumber>3.1.1.-</ecNumber>
    </recommendedName>
</protein>